<feature type="chain" id="PRO_0000224535" description="Valine--tRNA ligase">
    <location>
        <begin position="1"/>
        <end position="950"/>
    </location>
</feature>
<feature type="coiled-coil region" evidence="1">
    <location>
        <begin position="881"/>
        <end position="950"/>
    </location>
</feature>
<feature type="short sequence motif" description="'HIGH' region">
    <location>
        <begin position="40"/>
        <end position="50"/>
    </location>
</feature>
<feature type="short sequence motif" description="'KMSKS' region">
    <location>
        <begin position="551"/>
        <end position="555"/>
    </location>
</feature>
<feature type="binding site" evidence="1">
    <location>
        <position position="554"/>
    </location>
    <ligand>
        <name>ATP</name>
        <dbReference type="ChEBI" id="CHEBI:30616"/>
    </ligand>
</feature>
<feature type="helix" evidence="2">
    <location>
        <begin position="639"/>
        <end position="653"/>
    </location>
</feature>
<feature type="helix" evidence="2">
    <location>
        <begin position="669"/>
        <end position="690"/>
    </location>
</feature>
<feature type="helix" evidence="2">
    <location>
        <begin position="694"/>
        <end position="707"/>
    </location>
</feature>
<feature type="helix" evidence="2">
    <location>
        <begin position="708"/>
        <end position="712"/>
    </location>
</feature>
<feature type="helix" evidence="2">
    <location>
        <begin position="713"/>
        <end position="716"/>
    </location>
</feature>
<feature type="helix" evidence="2">
    <location>
        <begin position="718"/>
        <end position="721"/>
    </location>
</feature>
<feature type="helix" evidence="2">
    <location>
        <begin position="728"/>
        <end position="749"/>
    </location>
</feature>
<feature type="turn" evidence="2">
    <location>
        <begin position="750"/>
        <end position="752"/>
    </location>
</feature>
<feature type="helix" evidence="2">
    <location>
        <begin position="754"/>
        <end position="768"/>
    </location>
</feature>
<feature type="helix" evidence="2">
    <location>
        <begin position="775"/>
        <end position="777"/>
    </location>
</feature>
<feature type="helix" evidence="2">
    <location>
        <begin position="785"/>
        <end position="787"/>
    </location>
</feature>
<feature type="helix" evidence="2">
    <location>
        <begin position="790"/>
        <end position="812"/>
    </location>
</feature>
<feature type="strand" evidence="2">
    <location>
        <begin position="821"/>
        <end position="827"/>
    </location>
</feature>
<feature type="helix" evidence="2">
    <location>
        <begin position="830"/>
        <end position="846"/>
    </location>
</feature>
<feature type="strand" evidence="2">
    <location>
        <begin position="849"/>
        <end position="854"/>
    </location>
</feature>
<feature type="strand" evidence="2">
    <location>
        <begin position="863"/>
        <end position="869"/>
    </location>
</feature>
<feature type="strand" evidence="2">
    <location>
        <begin position="872"/>
        <end position="877"/>
    </location>
</feature>
<evidence type="ECO:0000255" key="1">
    <source>
        <dbReference type="HAMAP-Rule" id="MF_02004"/>
    </source>
</evidence>
<evidence type="ECO:0007829" key="2">
    <source>
        <dbReference type="PDB" id="4XKZ"/>
    </source>
</evidence>
<dbReference type="EC" id="6.1.1.9" evidence="1"/>
<dbReference type="EMBL" id="AE004091">
    <property type="protein sequence ID" value="AAG07221.1"/>
    <property type="molecule type" value="Genomic_DNA"/>
</dbReference>
<dbReference type="PIR" id="G83167">
    <property type="entry name" value="G83167"/>
</dbReference>
<dbReference type="RefSeq" id="NP_252523.1">
    <property type="nucleotide sequence ID" value="NC_002516.2"/>
</dbReference>
<dbReference type="RefSeq" id="WP_003113794.1">
    <property type="nucleotide sequence ID" value="NZ_QZGE01000001.1"/>
</dbReference>
<dbReference type="PDB" id="4XKZ">
    <property type="method" value="X-ray"/>
    <property type="resolution" value="1.95 A"/>
    <property type="chains" value="A=639-898"/>
</dbReference>
<dbReference type="PDBsum" id="4XKZ"/>
<dbReference type="SMR" id="Q9HXH0"/>
<dbReference type="FunCoup" id="Q9HXH0">
    <property type="interactions" value="676"/>
</dbReference>
<dbReference type="STRING" id="208964.PA3834"/>
<dbReference type="PaxDb" id="208964-PA3834"/>
<dbReference type="GeneID" id="879905"/>
<dbReference type="KEGG" id="pae:PA3834"/>
<dbReference type="PATRIC" id="fig|208964.12.peg.4014"/>
<dbReference type="PseudoCAP" id="PA3834"/>
<dbReference type="HOGENOM" id="CLU_001493_0_2_6"/>
<dbReference type="InParanoid" id="Q9HXH0"/>
<dbReference type="OrthoDB" id="9810365at2"/>
<dbReference type="PhylomeDB" id="Q9HXH0"/>
<dbReference type="BioCyc" id="PAER208964:G1FZ6-3906-MONOMER"/>
<dbReference type="EvolutionaryTrace" id="Q9HXH0"/>
<dbReference type="Proteomes" id="UP000002438">
    <property type="component" value="Chromosome"/>
</dbReference>
<dbReference type="GO" id="GO:0005829">
    <property type="term" value="C:cytosol"/>
    <property type="evidence" value="ECO:0000318"/>
    <property type="project" value="GO_Central"/>
</dbReference>
<dbReference type="GO" id="GO:0002161">
    <property type="term" value="F:aminoacyl-tRNA deacylase activity"/>
    <property type="evidence" value="ECO:0007669"/>
    <property type="project" value="InterPro"/>
</dbReference>
<dbReference type="GO" id="GO:0005524">
    <property type="term" value="F:ATP binding"/>
    <property type="evidence" value="ECO:0007669"/>
    <property type="project" value="UniProtKB-UniRule"/>
</dbReference>
<dbReference type="GO" id="GO:0004832">
    <property type="term" value="F:valine-tRNA ligase activity"/>
    <property type="evidence" value="ECO:0000318"/>
    <property type="project" value="GO_Central"/>
</dbReference>
<dbReference type="GO" id="GO:0006438">
    <property type="term" value="P:valyl-tRNA aminoacylation"/>
    <property type="evidence" value="ECO:0000318"/>
    <property type="project" value="GO_Central"/>
</dbReference>
<dbReference type="CDD" id="cd07962">
    <property type="entry name" value="Anticodon_Ia_Val"/>
    <property type="match status" value="1"/>
</dbReference>
<dbReference type="CDD" id="cd00817">
    <property type="entry name" value="ValRS_core"/>
    <property type="match status" value="1"/>
</dbReference>
<dbReference type="FunFam" id="1.10.287.380:FF:000001">
    <property type="entry name" value="Valine--tRNA ligase"/>
    <property type="match status" value="1"/>
</dbReference>
<dbReference type="FunFam" id="1.10.730.10:FF:000007">
    <property type="entry name" value="Valine--tRNA ligase"/>
    <property type="match status" value="1"/>
</dbReference>
<dbReference type="FunFam" id="3.40.50.620:FF:000146">
    <property type="entry name" value="Valine--tRNA ligase"/>
    <property type="match status" value="1"/>
</dbReference>
<dbReference type="FunFam" id="3.90.740.10:FF:000003">
    <property type="entry name" value="Valine--tRNA ligase"/>
    <property type="match status" value="1"/>
</dbReference>
<dbReference type="FunFam" id="3.40.50.620:FF:000020">
    <property type="entry name" value="Valine--tRNA ligase, mitochondrial"/>
    <property type="match status" value="1"/>
</dbReference>
<dbReference type="Gene3D" id="3.40.50.620">
    <property type="entry name" value="HUPs"/>
    <property type="match status" value="2"/>
</dbReference>
<dbReference type="Gene3D" id="1.10.730.10">
    <property type="entry name" value="Isoleucyl-tRNA Synthetase, Domain 1"/>
    <property type="match status" value="1"/>
</dbReference>
<dbReference type="Gene3D" id="1.10.287.380">
    <property type="entry name" value="Valyl-tRNA synthetase, C-terminal domain"/>
    <property type="match status" value="1"/>
</dbReference>
<dbReference type="Gene3D" id="3.90.740.10">
    <property type="entry name" value="Valyl/Leucyl/Isoleucyl-tRNA synthetase, editing domain"/>
    <property type="match status" value="2"/>
</dbReference>
<dbReference type="HAMAP" id="MF_02004">
    <property type="entry name" value="Val_tRNA_synth_type1"/>
    <property type="match status" value="1"/>
</dbReference>
<dbReference type="InterPro" id="IPR001412">
    <property type="entry name" value="aa-tRNA-synth_I_CS"/>
</dbReference>
<dbReference type="InterPro" id="IPR002300">
    <property type="entry name" value="aa-tRNA-synth_Ia"/>
</dbReference>
<dbReference type="InterPro" id="IPR033705">
    <property type="entry name" value="Anticodon_Ia_Val"/>
</dbReference>
<dbReference type="InterPro" id="IPR013155">
    <property type="entry name" value="M/V/L/I-tRNA-synth_anticd-bd"/>
</dbReference>
<dbReference type="InterPro" id="IPR014729">
    <property type="entry name" value="Rossmann-like_a/b/a_fold"/>
</dbReference>
<dbReference type="InterPro" id="IPR010978">
    <property type="entry name" value="tRNA-bd_arm"/>
</dbReference>
<dbReference type="InterPro" id="IPR009080">
    <property type="entry name" value="tRNAsynth_Ia_anticodon-bd"/>
</dbReference>
<dbReference type="InterPro" id="IPR037118">
    <property type="entry name" value="Val-tRNA_synth_C_sf"/>
</dbReference>
<dbReference type="InterPro" id="IPR019499">
    <property type="entry name" value="Val-tRNA_synth_tRNA-bd"/>
</dbReference>
<dbReference type="InterPro" id="IPR009008">
    <property type="entry name" value="Val/Leu/Ile-tRNA-synth_edit"/>
</dbReference>
<dbReference type="InterPro" id="IPR002303">
    <property type="entry name" value="Valyl-tRNA_ligase"/>
</dbReference>
<dbReference type="NCBIfam" id="NF004349">
    <property type="entry name" value="PRK05729.1"/>
    <property type="match status" value="1"/>
</dbReference>
<dbReference type="NCBIfam" id="TIGR00422">
    <property type="entry name" value="valS"/>
    <property type="match status" value="1"/>
</dbReference>
<dbReference type="PANTHER" id="PTHR11946:SF93">
    <property type="entry name" value="VALINE--TRNA LIGASE, CHLOROPLASTIC_MITOCHONDRIAL 2"/>
    <property type="match status" value="1"/>
</dbReference>
<dbReference type="PANTHER" id="PTHR11946">
    <property type="entry name" value="VALYL-TRNA SYNTHETASES"/>
    <property type="match status" value="1"/>
</dbReference>
<dbReference type="Pfam" id="PF08264">
    <property type="entry name" value="Anticodon_1"/>
    <property type="match status" value="1"/>
</dbReference>
<dbReference type="Pfam" id="PF00133">
    <property type="entry name" value="tRNA-synt_1"/>
    <property type="match status" value="1"/>
</dbReference>
<dbReference type="Pfam" id="PF10458">
    <property type="entry name" value="Val_tRNA-synt_C"/>
    <property type="match status" value="1"/>
</dbReference>
<dbReference type="PRINTS" id="PR00986">
    <property type="entry name" value="TRNASYNTHVAL"/>
</dbReference>
<dbReference type="SUPFAM" id="SSF47323">
    <property type="entry name" value="Anticodon-binding domain of a subclass of class I aminoacyl-tRNA synthetases"/>
    <property type="match status" value="1"/>
</dbReference>
<dbReference type="SUPFAM" id="SSF52374">
    <property type="entry name" value="Nucleotidylyl transferase"/>
    <property type="match status" value="1"/>
</dbReference>
<dbReference type="SUPFAM" id="SSF46589">
    <property type="entry name" value="tRNA-binding arm"/>
    <property type="match status" value="1"/>
</dbReference>
<dbReference type="SUPFAM" id="SSF50677">
    <property type="entry name" value="ValRS/IleRS/LeuRS editing domain"/>
    <property type="match status" value="1"/>
</dbReference>
<dbReference type="PROSITE" id="PS00178">
    <property type="entry name" value="AA_TRNA_LIGASE_I"/>
    <property type="match status" value="1"/>
</dbReference>
<sequence length="950" mass="107708">MDKTYQPHAIETSWYETWESNDYFAPSGEGQPYTIMIPPPNVTGSLHMGHGFNNAIMDALIRYRRMQGRNTLWQPGTDHAGIATQMVVERQLGAQGVSRHDLGREKFLEKVWEWKEQSGGNITRQIRRLGSSVDWSRERFTMDDGLSEAVKEAFVRLHEDGLIYRGKRLVNWDTKLHTAISDLEVENHDEKGHLWHLRYPLVNGAKTSEGLDYLVVATTRPETLLGDAAVAVHPEDERYAKLIGQFAELPIVGRHIPIIADEYVDREFGTGCVKITPAHDFNDYEVGKRHDLPLINIFDKNAAVLAQAQVFHLDGSVNPNLDPSLPQSYAGMDRFAARKAIVAEFEAMGLLEKVDDHALKVPKGDRSGTVIEPWLTDQWYVSTKPLAEDAIAAVEDGRIQFVPKQYENMYFSWMRDIQDWCISRQLWWGHRIPAWYDEAGNVYVGRDEVEVRTKHKLGNEAELRQDEDVLDTWFSSGLWTFSTLGWPQQTEFLKTFHPTDVLVTGFDIIFFWVARMIMLTMHLVKNPDGTPQIPFKTVYVHGLVRDGQGQKMSKSKGNVLDPLDIVDGIDLDTLLQKRTSGMMQPKLAEKIAKQTRAEFPEGIASYGTDALRFTFCSLASTGRDIKFDMGRVEGFRNFCNKIWNAANFVIENTDGQDTGVNGEPVELSSVDRWIISQLQRTEQEVTRQLDAFRFDLAAQALYEFIWDEYCAWYLELVKPVLWDENAPIERQRGTRRTLIRVLETALRLAHPFMPFITEEIWQRIKGQAGKEGPTLMLQPWPVADEGRIDAAAEGDIEWVKALMLGVRQIRGEMNISMAKRIDIILKNASPSDHRRLADNEPLLMKLAKLESIRVLEAGEEAPMSATALVGDMEVLVPMAGLIDKSAELGRLDKEIQRLEGEVKRVGGKLSNEGFVAKAPADVIEKERAKLAEAEQALAKLAEQRQKIAAL</sequence>
<organism>
    <name type="scientific">Pseudomonas aeruginosa (strain ATCC 15692 / DSM 22644 / CIP 104116 / JCM 14847 / LMG 12228 / 1C / PRS 101 / PAO1)</name>
    <dbReference type="NCBI Taxonomy" id="208964"/>
    <lineage>
        <taxon>Bacteria</taxon>
        <taxon>Pseudomonadati</taxon>
        <taxon>Pseudomonadota</taxon>
        <taxon>Gammaproteobacteria</taxon>
        <taxon>Pseudomonadales</taxon>
        <taxon>Pseudomonadaceae</taxon>
        <taxon>Pseudomonas</taxon>
    </lineage>
</organism>
<comment type="function">
    <text evidence="1">Catalyzes the attachment of valine to tRNA(Val). As ValRS can inadvertently accommodate and process structurally similar amino acids such as threonine, to avoid such errors, it has a 'posttransfer' editing activity that hydrolyzes mischarged Thr-tRNA(Val) in a tRNA-dependent manner.</text>
</comment>
<comment type="catalytic activity">
    <reaction evidence="1">
        <text>tRNA(Val) + L-valine + ATP = L-valyl-tRNA(Val) + AMP + diphosphate</text>
        <dbReference type="Rhea" id="RHEA:10704"/>
        <dbReference type="Rhea" id="RHEA-COMP:9672"/>
        <dbReference type="Rhea" id="RHEA-COMP:9708"/>
        <dbReference type="ChEBI" id="CHEBI:30616"/>
        <dbReference type="ChEBI" id="CHEBI:33019"/>
        <dbReference type="ChEBI" id="CHEBI:57762"/>
        <dbReference type="ChEBI" id="CHEBI:78442"/>
        <dbReference type="ChEBI" id="CHEBI:78537"/>
        <dbReference type="ChEBI" id="CHEBI:456215"/>
        <dbReference type="EC" id="6.1.1.9"/>
    </reaction>
</comment>
<comment type="subunit">
    <text evidence="1">Monomer.</text>
</comment>
<comment type="subcellular location">
    <subcellularLocation>
        <location evidence="1">Cytoplasm</location>
    </subcellularLocation>
</comment>
<comment type="domain">
    <text evidence="1">ValRS has two distinct active sites: one for aminoacylation and one for editing. The misactivated threonine is translocated from the active site to the editing site.</text>
</comment>
<comment type="domain">
    <text evidence="1">The C-terminal coiled-coil domain is crucial for aminoacylation activity.</text>
</comment>
<comment type="similarity">
    <text evidence="1">Belongs to the class-I aminoacyl-tRNA synthetase family. ValS type 1 subfamily.</text>
</comment>
<name>SYV_PSEAE</name>
<protein>
    <recommendedName>
        <fullName evidence="1">Valine--tRNA ligase</fullName>
        <ecNumber evidence="1">6.1.1.9</ecNumber>
    </recommendedName>
    <alternativeName>
        <fullName evidence="1">Valyl-tRNA synthetase</fullName>
        <shortName evidence="1">ValRS</shortName>
    </alternativeName>
</protein>
<proteinExistence type="evidence at protein level"/>
<gene>
    <name evidence="1" type="primary">valS</name>
    <name type="ordered locus">PA3834</name>
</gene>
<keyword id="KW-0002">3D-structure</keyword>
<keyword id="KW-0030">Aminoacyl-tRNA synthetase</keyword>
<keyword id="KW-0067">ATP-binding</keyword>
<keyword id="KW-0175">Coiled coil</keyword>
<keyword id="KW-0963">Cytoplasm</keyword>
<keyword id="KW-0436">Ligase</keyword>
<keyword id="KW-0547">Nucleotide-binding</keyword>
<keyword id="KW-0648">Protein biosynthesis</keyword>
<keyword id="KW-1185">Reference proteome</keyword>
<accession>Q9HXH0</accession>
<reference key="1">
    <citation type="journal article" date="2000" name="Nature">
        <title>Complete genome sequence of Pseudomonas aeruginosa PAO1, an opportunistic pathogen.</title>
        <authorList>
            <person name="Stover C.K."/>
            <person name="Pham X.-Q.T."/>
            <person name="Erwin A.L."/>
            <person name="Mizoguchi S.D."/>
            <person name="Warrener P."/>
            <person name="Hickey M.J."/>
            <person name="Brinkman F.S.L."/>
            <person name="Hufnagle W.O."/>
            <person name="Kowalik D.J."/>
            <person name="Lagrou M."/>
            <person name="Garber R.L."/>
            <person name="Goltry L."/>
            <person name="Tolentino E."/>
            <person name="Westbrock-Wadman S."/>
            <person name="Yuan Y."/>
            <person name="Brody L.L."/>
            <person name="Coulter S.N."/>
            <person name="Folger K.R."/>
            <person name="Kas A."/>
            <person name="Larbig K."/>
            <person name="Lim R.M."/>
            <person name="Smith K.A."/>
            <person name="Spencer D.H."/>
            <person name="Wong G.K.-S."/>
            <person name="Wu Z."/>
            <person name="Paulsen I.T."/>
            <person name="Reizer J."/>
            <person name="Saier M.H. Jr."/>
            <person name="Hancock R.E.W."/>
            <person name="Lory S."/>
            <person name="Olson M.V."/>
        </authorList>
    </citation>
    <scope>NUCLEOTIDE SEQUENCE [LARGE SCALE GENOMIC DNA]</scope>
    <source>
        <strain>ATCC 15692 / DSM 22644 / CIP 104116 / JCM 14847 / LMG 12228 / 1C / PRS 101 / PAO1</strain>
    </source>
</reference>